<evidence type="ECO:0000250" key="1">
    <source>
        <dbReference type="UniProtKB" id="Q04571"/>
    </source>
</evidence>
<evidence type="ECO:0000255" key="2"/>
<evidence type="ECO:0000255" key="3">
    <source>
        <dbReference type="PROSITE-ProRule" id="PRU00498"/>
    </source>
</evidence>
<evidence type="ECO:0000269" key="4">
    <source>
    </source>
</evidence>
<evidence type="ECO:0000269" key="5">
    <source>
    </source>
</evidence>
<evidence type="ECO:0000269" key="6">
    <source>
    </source>
</evidence>
<evidence type="ECO:0000303" key="7">
    <source>
    </source>
</evidence>
<evidence type="ECO:0000305" key="8"/>
<evidence type="ECO:0000305" key="9">
    <source>
    </source>
</evidence>
<dbReference type="EMBL" id="AJ133700">
    <property type="protein sequence ID" value="CAB39309.1"/>
    <property type="molecule type" value="mRNA"/>
</dbReference>
<dbReference type="EMBL" id="AJ566370">
    <property type="protein sequence ID" value="CAD97454.1"/>
    <property type="molecule type" value="Genomic_DNA"/>
</dbReference>
<dbReference type="EMBL" id="CP090174">
    <property type="protein sequence ID" value="UJO24491.1"/>
    <property type="molecule type" value="Genomic_DNA"/>
</dbReference>
<dbReference type="OrthoDB" id="3648449at2759"/>
<dbReference type="Proteomes" id="UP000756132">
    <property type="component" value="Chromosome 12"/>
</dbReference>
<comment type="function">
    <text evidence="5 8">Aerial growth, conidiation, and dispersal of filamentous fungi in the environment rely upon a capability of their secreting small amphipathic proteins called hydrophobins (HPBs) with low sequence identity. Class I can self-assemble into an outermost layer of rodlet bundles on aerial cell surfaces, conferring cellular hydrophobicity that supports fungal growth, development and dispersal; whereas Class II form highly ordered films at water-air interfaces through intermolecular interactions but contribute nothing to the rodlet structure (Probable). Hcf-2 is a class I hydrophobin that is not necessary for the development of hyphae or conidia but contributes to cell surface hydrophobicity (PubMed:11343402).</text>
</comment>
<comment type="subunit">
    <text evidence="1">Self-assembles to form functional amyloid fibrils called rodlets. Self-assembly into fibrillar rodlets occurs spontaneously at hydrophobic:hydrophilic interfaces and the rodlets further associate laterally to form amphipathic monolayers.</text>
</comment>
<comment type="subcellular location">
    <subcellularLocation>
        <location evidence="9">Secreted</location>
    </subcellularLocation>
    <subcellularLocation>
        <location evidence="9">Secreted</location>
        <location evidence="9">Cell wall</location>
    </subcellularLocation>
</comment>
<comment type="tissue specificity">
    <text evidence="6">Expressed in conidia and aerial hyphae.</text>
</comment>
<comment type="induction">
    <text evidence="4">Expression is increased during sporulation (PubMed:10394901). Expression up-regulated by carbon or nitrogen starvation (PubMed:10394901).</text>
</comment>
<comment type="disruption phenotype">
    <text evidence="5">Does not affect the ability of the fungus to grow in vitro on agar plates or in liquid culture (PubMed:11343402). Does neither affect mycelium growth and sporulation, nor the frequency and speed of conidium germination (PubMed:11343402). When the four class I hydrophobins (hcf-1 to -4) are partially silenced, approximately 10 times fewer conidia are produced an the germination efficiency of conidia is reduced by about 50% (PubMed:11343402).</text>
</comment>
<comment type="similarity">
    <text evidence="8">Belongs to the fungal hydrophobin family.</text>
</comment>
<reference key="1">
    <citation type="journal article" date="1999" name="Mol. Gen. Genet.">
        <title>Isolation and characterisation of five different hydrophobin-encoding cDNAs from the fungal tomato pathogen Cladosporium fulvum.</title>
        <authorList>
            <person name="Segers G.C."/>
            <person name="Hamada W."/>
            <person name="Oliver R.P."/>
            <person name="Spanu P.D."/>
        </authorList>
    </citation>
    <scope>NUCLEOTIDE SEQUENCE [MRNA]</scope>
    <scope>INDUCTION</scope>
    <source>
        <strain>Race 4</strain>
    </source>
</reference>
<reference key="2">
    <citation type="journal article" date="2001" name="Fungal Genet. Biol.">
        <title>The hydrophobin HCf-1 of Cladosporium fulvum is required for efficient water-mediated dispersal of conidia.</title>
        <authorList>
            <person name="Whiteford J.R."/>
            <person name="Spanu P.D."/>
        </authorList>
    </citation>
    <scope>NUCLEOTIDE SEQUENCE [GENOMIC DNA]</scope>
    <scope>FUNCTION</scope>
    <scope>DISRUPTION PHENOTYPE</scope>
</reference>
<reference key="3">
    <citation type="journal article" date="2022" name="Microb. Genom.">
        <title>A chromosome-scale genome assembly of the tomato pathogen Cladosporium fulvum reveals a compartmentalized genome architecture and the presence of a dispensable chromosome.</title>
        <authorList>
            <person name="Zaccaron A.Z."/>
            <person name="Chen L.-H."/>
            <person name="Samaras A."/>
            <person name="Stergiopoulos I."/>
        </authorList>
    </citation>
    <scope>NUCLEOTIDE SEQUENCE [LARGE SCALE GENOMIC DNA]</scope>
    <source>
        <strain>Race5_Kim</strain>
    </source>
</reference>
<reference key="4">
    <citation type="journal article" date="2008" name="FEMS Microbiol. Lett.">
        <title>Localization of Cladosporium fulvum hydrophobins reveals a role for HCf-6 in adhesion.</title>
        <authorList>
            <person name="Lacroix H."/>
            <person name="Whiteford J.R."/>
            <person name="Spanu P.D."/>
        </authorList>
    </citation>
    <scope>TISSUE SPECIFICITY</scope>
</reference>
<organism>
    <name type="scientific">Passalora fulva</name>
    <name type="common">Tomato leaf mold</name>
    <name type="synonym">Cladosporium fulvum</name>
    <dbReference type="NCBI Taxonomy" id="5499"/>
    <lineage>
        <taxon>Eukaryota</taxon>
        <taxon>Fungi</taxon>
        <taxon>Dikarya</taxon>
        <taxon>Ascomycota</taxon>
        <taxon>Pezizomycotina</taxon>
        <taxon>Dothideomycetes</taxon>
        <taxon>Dothideomycetidae</taxon>
        <taxon>Mycosphaerellales</taxon>
        <taxon>Mycosphaerellaceae</taxon>
        <taxon>Fulvia</taxon>
    </lineage>
</organism>
<keyword id="KW-0134">Cell wall</keyword>
<keyword id="KW-1015">Disulfide bond</keyword>
<keyword id="KW-0325">Glycoprotein</keyword>
<keyword id="KW-1185">Reference proteome</keyword>
<keyword id="KW-0964">Secreted</keyword>
<keyword id="KW-0732">Signal</keyword>
<gene>
    <name evidence="7" type="primary">hcf-2</name>
    <name type="ORF">CLAFUR5_13715</name>
</gene>
<feature type="signal peptide" evidence="2">
    <location>
        <begin position="1"/>
        <end position="18"/>
    </location>
</feature>
<feature type="chain" id="PRO_5010972339" description="Class I hydrophobin 2">
    <location>
        <begin position="19"/>
        <end position="121"/>
    </location>
</feature>
<feature type="glycosylation site" description="N-linked (GlcNAc...) asparagine" evidence="3">
    <location>
        <position position="83"/>
    </location>
</feature>
<feature type="disulfide bond" evidence="1">
    <location>
        <begin position="52"/>
        <end position="101"/>
    </location>
</feature>
<feature type="disulfide bond" evidence="1">
    <location>
        <begin position="60"/>
        <end position="94"/>
    </location>
</feature>
<feature type="disulfide bond" evidence="1">
    <location>
        <begin position="61"/>
        <end position="79"/>
    </location>
</feature>
<feature type="disulfide bond" evidence="1">
    <location>
        <begin position="102"/>
        <end position="116"/>
    </location>
</feature>
<sequence>MQFTTIVMTLAAAVAVTAYPGSSSAFGVGQDEHKHHSSDDHSATGASKGATCAVGSQVSCCTTDSSGSDVLGNVLGGSCLVDNLSLISILNSQCPGANTFCCPSNQDGTLNIHAACIPVAL</sequence>
<name>HCF2_PASFU</name>
<protein>
    <recommendedName>
        <fullName evidence="7">Class I hydrophobin 2</fullName>
    </recommendedName>
</protein>
<accession>O94217</accession>
<proteinExistence type="evidence at transcript level"/>